<dbReference type="EC" id="5.2.1.8" evidence="1"/>
<dbReference type="EMBL" id="CP000474">
    <property type="protein sequence ID" value="ABM07397.1"/>
    <property type="molecule type" value="Genomic_DNA"/>
</dbReference>
<dbReference type="RefSeq" id="WP_011775060.1">
    <property type="nucleotide sequence ID" value="NC_008711.1"/>
</dbReference>
<dbReference type="SMR" id="A1R7A5"/>
<dbReference type="STRING" id="290340.AAur_2383"/>
<dbReference type="KEGG" id="aau:AAur_2383"/>
<dbReference type="eggNOG" id="COG0544">
    <property type="taxonomic scope" value="Bacteria"/>
</dbReference>
<dbReference type="HOGENOM" id="CLU_033058_3_0_11"/>
<dbReference type="OrthoDB" id="9767721at2"/>
<dbReference type="Proteomes" id="UP000000637">
    <property type="component" value="Chromosome"/>
</dbReference>
<dbReference type="GO" id="GO:0005737">
    <property type="term" value="C:cytoplasm"/>
    <property type="evidence" value="ECO:0007669"/>
    <property type="project" value="UniProtKB-SubCell"/>
</dbReference>
<dbReference type="GO" id="GO:0003755">
    <property type="term" value="F:peptidyl-prolyl cis-trans isomerase activity"/>
    <property type="evidence" value="ECO:0007669"/>
    <property type="project" value="UniProtKB-UniRule"/>
</dbReference>
<dbReference type="GO" id="GO:0044183">
    <property type="term" value="F:protein folding chaperone"/>
    <property type="evidence" value="ECO:0007669"/>
    <property type="project" value="TreeGrafter"/>
</dbReference>
<dbReference type="GO" id="GO:0043022">
    <property type="term" value="F:ribosome binding"/>
    <property type="evidence" value="ECO:0007669"/>
    <property type="project" value="TreeGrafter"/>
</dbReference>
<dbReference type="GO" id="GO:0051083">
    <property type="term" value="P:'de novo' cotranslational protein folding"/>
    <property type="evidence" value="ECO:0007669"/>
    <property type="project" value="TreeGrafter"/>
</dbReference>
<dbReference type="GO" id="GO:0051301">
    <property type="term" value="P:cell division"/>
    <property type="evidence" value="ECO:0007669"/>
    <property type="project" value="UniProtKB-KW"/>
</dbReference>
<dbReference type="GO" id="GO:0061077">
    <property type="term" value="P:chaperone-mediated protein folding"/>
    <property type="evidence" value="ECO:0007669"/>
    <property type="project" value="TreeGrafter"/>
</dbReference>
<dbReference type="GO" id="GO:0015031">
    <property type="term" value="P:protein transport"/>
    <property type="evidence" value="ECO:0007669"/>
    <property type="project" value="UniProtKB-UniRule"/>
</dbReference>
<dbReference type="GO" id="GO:0043335">
    <property type="term" value="P:protein unfolding"/>
    <property type="evidence" value="ECO:0007669"/>
    <property type="project" value="TreeGrafter"/>
</dbReference>
<dbReference type="Gene3D" id="3.10.50.40">
    <property type="match status" value="1"/>
</dbReference>
<dbReference type="Gene3D" id="3.30.70.1050">
    <property type="entry name" value="Trigger factor ribosome-binding domain"/>
    <property type="match status" value="1"/>
</dbReference>
<dbReference type="Gene3D" id="1.10.3120.10">
    <property type="entry name" value="Trigger factor, C-terminal domain"/>
    <property type="match status" value="1"/>
</dbReference>
<dbReference type="HAMAP" id="MF_00303">
    <property type="entry name" value="Trigger_factor_Tig"/>
    <property type="match status" value="1"/>
</dbReference>
<dbReference type="InterPro" id="IPR046357">
    <property type="entry name" value="PPIase_dom_sf"/>
</dbReference>
<dbReference type="InterPro" id="IPR001179">
    <property type="entry name" value="PPIase_FKBP_dom"/>
</dbReference>
<dbReference type="InterPro" id="IPR005215">
    <property type="entry name" value="Trig_fac"/>
</dbReference>
<dbReference type="InterPro" id="IPR008880">
    <property type="entry name" value="Trigger_fac_C"/>
</dbReference>
<dbReference type="InterPro" id="IPR037041">
    <property type="entry name" value="Trigger_fac_C_sf"/>
</dbReference>
<dbReference type="InterPro" id="IPR008881">
    <property type="entry name" value="Trigger_fac_ribosome-bd_bac"/>
</dbReference>
<dbReference type="InterPro" id="IPR036611">
    <property type="entry name" value="Trigger_fac_ribosome-bd_sf"/>
</dbReference>
<dbReference type="InterPro" id="IPR027304">
    <property type="entry name" value="Trigger_fact/SurA_dom_sf"/>
</dbReference>
<dbReference type="NCBIfam" id="TIGR00115">
    <property type="entry name" value="tig"/>
    <property type="match status" value="1"/>
</dbReference>
<dbReference type="PANTHER" id="PTHR30560">
    <property type="entry name" value="TRIGGER FACTOR CHAPERONE AND PEPTIDYL-PROLYL CIS/TRANS ISOMERASE"/>
    <property type="match status" value="1"/>
</dbReference>
<dbReference type="PANTHER" id="PTHR30560:SF3">
    <property type="entry name" value="TRIGGER FACTOR-LIKE PROTEIN TIG, CHLOROPLASTIC"/>
    <property type="match status" value="1"/>
</dbReference>
<dbReference type="Pfam" id="PF00254">
    <property type="entry name" value="FKBP_C"/>
    <property type="match status" value="1"/>
</dbReference>
<dbReference type="Pfam" id="PF05698">
    <property type="entry name" value="Trigger_C"/>
    <property type="match status" value="1"/>
</dbReference>
<dbReference type="Pfam" id="PF05697">
    <property type="entry name" value="Trigger_N"/>
    <property type="match status" value="1"/>
</dbReference>
<dbReference type="PIRSF" id="PIRSF003095">
    <property type="entry name" value="Trigger_factor"/>
    <property type="match status" value="1"/>
</dbReference>
<dbReference type="SUPFAM" id="SSF54534">
    <property type="entry name" value="FKBP-like"/>
    <property type="match status" value="1"/>
</dbReference>
<dbReference type="SUPFAM" id="SSF109998">
    <property type="entry name" value="Triger factor/SurA peptide-binding domain-like"/>
    <property type="match status" value="1"/>
</dbReference>
<dbReference type="SUPFAM" id="SSF102735">
    <property type="entry name" value="Trigger factor ribosome-binding domain"/>
    <property type="match status" value="1"/>
</dbReference>
<reference key="1">
    <citation type="journal article" date="2006" name="PLoS Genet.">
        <title>Secrets of soil survival revealed by the genome sequence of Arthrobacter aurescens TC1.</title>
        <authorList>
            <person name="Mongodin E.F."/>
            <person name="Shapir N."/>
            <person name="Daugherty S.C."/>
            <person name="DeBoy R.T."/>
            <person name="Emerson J.B."/>
            <person name="Shvartzbeyn A."/>
            <person name="Radune D."/>
            <person name="Vamathevan J."/>
            <person name="Riggs F."/>
            <person name="Grinberg V."/>
            <person name="Khouri H.M."/>
            <person name="Wackett L.P."/>
            <person name="Nelson K.E."/>
            <person name="Sadowsky M.J."/>
        </authorList>
    </citation>
    <scope>NUCLEOTIDE SEQUENCE [LARGE SCALE GENOMIC DNA]</scope>
    <source>
        <strain>TC1</strain>
    </source>
</reference>
<feature type="chain" id="PRO_1000022642" description="Trigger factor">
    <location>
        <begin position="1"/>
        <end position="460"/>
    </location>
</feature>
<feature type="domain" description="PPIase FKBP-type" evidence="1">
    <location>
        <begin position="166"/>
        <end position="245"/>
    </location>
</feature>
<feature type="region of interest" description="Disordered" evidence="2">
    <location>
        <begin position="434"/>
        <end position="460"/>
    </location>
</feature>
<feature type="compositionally biased region" description="Low complexity" evidence="2">
    <location>
        <begin position="449"/>
        <end position="460"/>
    </location>
</feature>
<keyword id="KW-0131">Cell cycle</keyword>
<keyword id="KW-0132">Cell division</keyword>
<keyword id="KW-0143">Chaperone</keyword>
<keyword id="KW-0963">Cytoplasm</keyword>
<keyword id="KW-0413">Isomerase</keyword>
<keyword id="KW-0697">Rotamase</keyword>
<sequence>MKSAVENLTATRVKLNVEVPFEELKPSIDAAYKTVASQIQVPGFRKGKVPSKLIDQRVGRGYVLETAINDGLNGWYQAAVQETGVRPLSRPEVEITEVPDPSATDGELKFQVEIDVRPEIELPDYAGIKVEVAAAESSEADVDKSLDELRGRFGTLKSVERPAKNDDFLTIDITATIDGEDIDSAAGLSYQVGAGTMLEGLDEAVTGLSADEEAIFETTLVGGDHAGESAQVKVVVKAVKERELPEANDDFAQLASEFDTLAELREDLAKQAADSKVVEQGVEARDKVLDKLVELVEVPVPDSVVEEQIEAHFNPENAHGEGDHDTEEHRAEVKANTERAFQNEIILDAIADKEEVDVSQNELIDYIVTTASQYGMDPNQFAQIIDQSGQVPMMVSEVRRRKALAVVLGQAEVVDSEGNKVDLTDFVRPAGEAAAEEAAAGEANEEADVVASDDPAAVKF</sequence>
<comment type="function">
    <text evidence="1">Involved in protein export. Acts as a chaperone by maintaining the newly synthesized protein in an open conformation. Functions as a peptidyl-prolyl cis-trans isomerase.</text>
</comment>
<comment type="catalytic activity">
    <reaction evidence="1">
        <text>[protein]-peptidylproline (omega=180) = [protein]-peptidylproline (omega=0)</text>
        <dbReference type="Rhea" id="RHEA:16237"/>
        <dbReference type="Rhea" id="RHEA-COMP:10747"/>
        <dbReference type="Rhea" id="RHEA-COMP:10748"/>
        <dbReference type="ChEBI" id="CHEBI:83833"/>
        <dbReference type="ChEBI" id="CHEBI:83834"/>
        <dbReference type="EC" id="5.2.1.8"/>
    </reaction>
</comment>
<comment type="subcellular location">
    <subcellularLocation>
        <location>Cytoplasm</location>
    </subcellularLocation>
    <text evidence="1">About half TF is bound to the ribosome near the polypeptide exit tunnel while the other half is free in the cytoplasm.</text>
</comment>
<comment type="domain">
    <text evidence="1">Consists of 3 domains; the N-terminus binds the ribosome, the middle domain has PPIase activity, while the C-terminus has intrinsic chaperone activity on its own.</text>
</comment>
<comment type="similarity">
    <text evidence="1">Belongs to the FKBP-type PPIase family. Tig subfamily.</text>
</comment>
<evidence type="ECO:0000255" key="1">
    <source>
        <dbReference type="HAMAP-Rule" id="MF_00303"/>
    </source>
</evidence>
<evidence type="ECO:0000256" key="2">
    <source>
        <dbReference type="SAM" id="MobiDB-lite"/>
    </source>
</evidence>
<organism>
    <name type="scientific">Paenarthrobacter aurescens (strain TC1)</name>
    <dbReference type="NCBI Taxonomy" id="290340"/>
    <lineage>
        <taxon>Bacteria</taxon>
        <taxon>Bacillati</taxon>
        <taxon>Actinomycetota</taxon>
        <taxon>Actinomycetes</taxon>
        <taxon>Micrococcales</taxon>
        <taxon>Micrococcaceae</taxon>
        <taxon>Paenarthrobacter</taxon>
    </lineage>
</organism>
<protein>
    <recommendedName>
        <fullName evidence="1">Trigger factor</fullName>
        <shortName evidence="1">TF</shortName>
        <ecNumber evidence="1">5.2.1.8</ecNumber>
    </recommendedName>
    <alternativeName>
        <fullName evidence="1">PPIase</fullName>
    </alternativeName>
</protein>
<gene>
    <name evidence="1" type="primary">tig</name>
    <name type="ordered locus">AAur_2383</name>
</gene>
<name>TIG_PAEAT</name>
<accession>A1R7A5</accession>
<proteinExistence type="inferred from homology"/>